<protein>
    <recommendedName>
        <fullName evidence="7">Glycerophosphodiester phosphodiesterase GDPDL5</fullName>
        <ecNumber evidence="1">3.1.4.46</ecNumber>
    </recommendedName>
    <alternativeName>
        <fullName evidence="6">Glycerophosphodiester phosphodiesterase-like 5</fullName>
        <shortName evidence="6">ATGDPDL5</shortName>
    </alternativeName>
    <alternativeName>
        <fullName evidence="5">Glycerophosphodiesterase-like 4</fullName>
    </alternativeName>
    <alternativeName>
        <fullName evidence="5">Protein SHV3-LIKE 3</fullName>
    </alternativeName>
</protein>
<dbReference type="EC" id="3.1.4.46" evidence="1"/>
<dbReference type="EMBL" id="AC011664">
    <property type="protein sequence ID" value="AAF14830.1"/>
    <property type="molecule type" value="Genomic_DNA"/>
</dbReference>
<dbReference type="EMBL" id="CP002686">
    <property type="protein sequence ID" value="AEE76390.1"/>
    <property type="molecule type" value="Genomic_DNA"/>
</dbReference>
<dbReference type="EMBL" id="BT004193">
    <property type="protein sequence ID" value="AAO42211.1"/>
    <property type="molecule type" value="mRNA"/>
</dbReference>
<dbReference type="RefSeq" id="NP_188688.1">
    <property type="nucleotide sequence ID" value="NM_112944.3"/>
</dbReference>
<dbReference type="SMR" id="F4JEQ1"/>
<dbReference type="STRING" id="3702.F4JEQ1"/>
<dbReference type="GlyCosmos" id="F4JEQ1">
    <property type="glycosylation" value="9 sites, No reported glycans"/>
</dbReference>
<dbReference type="GlyGen" id="F4JEQ1">
    <property type="glycosylation" value="9 sites"/>
</dbReference>
<dbReference type="iPTMnet" id="F4JEQ1"/>
<dbReference type="PaxDb" id="3702-AT3G20520.1"/>
<dbReference type="ProteomicsDB" id="247029"/>
<dbReference type="EnsemblPlants" id="AT3G20520.1">
    <property type="protein sequence ID" value="AT3G20520.1"/>
    <property type="gene ID" value="AT3G20520"/>
</dbReference>
<dbReference type="GeneID" id="821598"/>
<dbReference type="Gramene" id="AT3G20520.1">
    <property type="protein sequence ID" value="AT3G20520.1"/>
    <property type="gene ID" value="AT3G20520"/>
</dbReference>
<dbReference type="KEGG" id="ath:AT3G20520"/>
<dbReference type="Araport" id="AT3G20520"/>
<dbReference type="TAIR" id="AT3G20520">
    <property type="gene designation" value="SVL3"/>
</dbReference>
<dbReference type="eggNOG" id="KOG2258">
    <property type="taxonomic scope" value="Eukaryota"/>
</dbReference>
<dbReference type="HOGENOM" id="CLU_010414_0_0_1"/>
<dbReference type="InParanoid" id="F4JEQ1"/>
<dbReference type="OrthoDB" id="1058301at2759"/>
<dbReference type="PRO" id="PR:F4JEQ1"/>
<dbReference type="Proteomes" id="UP000006548">
    <property type="component" value="Chromosome 3"/>
</dbReference>
<dbReference type="ExpressionAtlas" id="F4JEQ1">
    <property type="expression patterns" value="baseline and differential"/>
</dbReference>
<dbReference type="GO" id="GO:0016020">
    <property type="term" value="C:membrane"/>
    <property type="evidence" value="ECO:0007669"/>
    <property type="project" value="UniProtKB-SubCell"/>
</dbReference>
<dbReference type="GO" id="GO:0008889">
    <property type="term" value="F:glycerophosphodiester phosphodiesterase activity"/>
    <property type="evidence" value="ECO:0007669"/>
    <property type="project" value="UniProtKB-EC"/>
</dbReference>
<dbReference type="GO" id="GO:0006071">
    <property type="term" value="P:glycerol metabolic process"/>
    <property type="evidence" value="ECO:0007669"/>
    <property type="project" value="UniProtKB-KW"/>
</dbReference>
<dbReference type="GO" id="GO:0006629">
    <property type="term" value="P:lipid metabolic process"/>
    <property type="evidence" value="ECO:0007669"/>
    <property type="project" value="InterPro"/>
</dbReference>
<dbReference type="CDD" id="cd08603">
    <property type="entry name" value="GDPD_SHV3_repeat_1"/>
    <property type="match status" value="1"/>
</dbReference>
<dbReference type="CDD" id="cd08604">
    <property type="entry name" value="GDPD_SHV3_repeat_2"/>
    <property type="match status" value="1"/>
</dbReference>
<dbReference type="FunFam" id="3.20.20.190:FF:000011">
    <property type="entry name" value="Glycerophosphodiester phosphodiesterase GDPDL3"/>
    <property type="match status" value="1"/>
</dbReference>
<dbReference type="Gene3D" id="3.20.20.190">
    <property type="entry name" value="Phosphatidylinositol (PI) phosphodiesterase"/>
    <property type="match status" value="2"/>
</dbReference>
<dbReference type="InterPro" id="IPR030395">
    <property type="entry name" value="GP_PDE_dom"/>
</dbReference>
<dbReference type="InterPro" id="IPR017946">
    <property type="entry name" value="PLC-like_Pdiesterase_TIM-brl"/>
</dbReference>
<dbReference type="PANTHER" id="PTHR43620:SF10">
    <property type="entry name" value="GLYCEROPHOSPHODIESTER PHOSPHODIESTERASE GDPDL5"/>
    <property type="match status" value="1"/>
</dbReference>
<dbReference type="PANTHER" id="PTHR43620">
    <property type="entry name" value="GLYCEROPHOSPHORYL DIESTER PHOSPHODIESTERASE"/>
    <property type="match status" value="1"/>
</dbReference>
<dbReference type="Pfam" id="PF03009">
    <property type="entry name" value="GDPD"/>
    <property type="match status" value="1"/>
</dbReference>
<dbReference type="SUPFAM" id="SSF51695">
    <property type="entry name" value="PLC-like phosphodiesterases"/>
    <property type="match status" value="2"/>
</dbReference>
<dbReference type="PROSITE" id="PS51704">
    <property type="entry name" value="GP_PDE"/>
    <property type="match status" value="2"/>
</dbReference>
<gene>
    <name evidence="6" type="primary">GDPDL5</name>
    <name evidence="5" type="synonym">GDPL4</name>
    <name evidence="5" type="synonym">SVL3</name>
    <name evidence="8" type="ordered locus">At3g20520</name>
    <name type="ORF">K10D20</name>
</gene>
<evidence type="ECO:0000250" key="1">
    <source>
        <dbReference type="UniProtKB" id="Q7Y208"/>
    </source>
</evidence>
<evidence type="ECO:0000255" key="2"/>
<evidence type="ECO:0000255" key="3">
    <source>
        <dbReference type="PROSITE-ProRule" id="PRU00498"/>
    </source>
</evidence>
<evidence type="ECO:0000269" key="4">
    <source>
    </source>
</evidence>
<evidence type="ECO:0000303" key="5">
    <source>
    </source>
</evidence>
<evidence type="ECO:0000303" key="6">
    <source>
    </source>
</evidence>
<evidence type="ECO:0000305" key="7"/>
<evidence type="ECO:0000312" key="8">
    <source>
        <dbReference type="Araport" id="AT3G20520"/>
    </source>
</evidence>
<evidence type="ECO:0000312" key="9">
    <source>
        <dbReference type="EMBL" id="AEE76390.1"/>
    </source>
</evidence>
<keyword id="KW-0319">Glycerol metabolism</keyword>
<keyword id="KW-0325">Glycoprotein</keyword>
<keyword id="KW-0378">Hydrolase</keyword>
<keyword id="KW-0472">Membrane</keyword>
<keyword id="KW-1185">Reference proteome</keyword>
<keyword id="KW-0732">Signal</keyword>
<keyword id="KW-0812">Transmembrane</keyword>
<keyword id="KW-1133">Transmembrane helix</keyword>
<sequence length="729" mass="81360">MACPRVIFLILITFFILQTAFSSSWQTLSGKPPAVIARGGFSGMFPDSSIQAYQLVNITTSPDVMLWCDLQLTKDGVGICFPNLKLDNGSNVIRIDPHYKERFSVDFTWKELSDVKLAQGVVSRPYIFDDVSSILAIEEVAKLTASGLWLNIQDSAFYAKHNLSMRNSVVSLSRRLKVNFISSPGISFLKSMKNSVKPTVTKLIFRFLKQEHIEPFTNQSYGSLAKNLSYIRTFSSGILVPKSYIWPVDSALYLQPHTSLVTDAHKEGLQVFASEFANDFVIAYNYSYDPTAEYLSFIDNGNFSVDGFLSDFPVTPYRAINCFSHVDPKRAKEQAKITIISKNGASGDFPGCTDLAYQRAASDGADILDCNVQMSKDKIPFCMSSFDLINSTNVIETSFRNLSSVVSEINPRRSGIYTFSLTMSQIQTLKPTISNLEKDSGLFRNPRNNKAGKFLTLSEFLFLPNRYSSLLGLLIEVENAAYLVEHQGISVVDAVLDELKRATTQQNKTSARTILIQSTDKSVLMKFKEKNKMNHDELVYRVDDNIRDVADSAIKDIKNFAGSIVISKKSVFPYKGFIILEKETNIASKLKSNGLRVYVERFSNECVTHAFDFYDDPTLEIDSFVRDVQIDGIITDFPATTARYRKNKCYGEFGLTTTGELITFANPMLLPPAEAPYPALLDSDVTEPPLPEARSQPPASSPSKAEEKAIEVPFAFIAMAILVCFFISV</sequence>
<reference key="1">
    <citation type="journal article" date="2000" name="Nature">
        <title>Sequence and analysis of chromosome 3 of the plant Arabidopsis thaliana.</title>
        <authorList>
            <person name="Salanoubat M."/>
            <person name="Lemcke K."/>
            <person name="Rieger M."/>
            <person name="Ansorge W."/>
            <person name="Unseld M."/>
            <person name="Fartmann B."/>
            <person name="Valle G."/>
            <person name="Bloecker H."/>
            <person name="Perez-Alonso M."/>
            <person name="Obermaier B."/>
            <person name="Delseny M."/>
            <person name="Boutry M."/>
            <person name="Grivell L.A."/>
            <person name="Mache R."/>
            <person name="Puigdomenech P."/>
            <person name="De Simone V."/>
            <person name="Choisne N."/>
            <person name="Artiguenave F."/>
            <person name="Robert C."/>
            <person name="Brottier P."/>
            <person name="Wincker P."/>
            <person name="Cattolico L."/>
            <person name="Weissenbach J."/>
            <person name="Saurin W."/>
            <person name="Quetier F."/>
            <person name="Schaefer M."/>
            <person name="Mueller-Auer S."/>
            <person name="Gabel C."/>
            <person name="Fuchs M."/>
            <person name="Benes V."/>
            <person name="Wurmbach E."/>
            <person name="Drzonek H."/>
            <person name="Erfle H."/>
            <person name="Jordan N."/>
            <person name="Bangert S."/>
            <person name="Wiedelmann R."/>
            <person name="Kranz H."/>
            <person name="Voss H."/>
            <person name="Holland R."/>
            <person name="Brandt P."/>
            <person name="Nyakatura G."/>
            <person name="Vezzi A."/>
            <person name="D'Angelo M."/>
            <person name="Pallavicini A."/>
            <person name="Toppo S."/>
            <person name="Simionati B."/>
            <person name="Conrad A."/>
            <person name="Hornischer K."/>
            <person name="Kauer G."/>
            <person name="Loehnert T.-H."/>
            <person name="Nordsiek G."/>
            <person name="Reichelt J."/>
            <person name="Scharfe M."/>
            <person name="Schoen O."/>
            <person name="Bargues M."/>
            <person name="Terol J."/>
            <person name="Climent J."/>
            <person name="Navarro P."/>
            <person name="Collado C."/>
            <person name="Perez-Perez A."/>
            <person name="Ottenwaelder B."/>
            <person name="Duchemin D."/>
            <person name="Cooke R."/>
            <person name="Laudie M."/>
            <person name="Berger-Llauro C."/>
            <person name="Purnelle B."/>
            <person name="Masuy D."/>
            <person name="de Haan M."/>
            <person name="Maarse A.C."/>
            <person name="Alcaraz J.-P."/>
            <person name="Cottet A."/>
            <person name="Casacuberta E."/>
            <person name="Monfort A."/>
            <person name="Argiriou A."/>
            <person name="Flores M."/>
            <person name="Liguori R."/>
            <person name="Vitale D."/>
            <person name="Mannhaupt G."/>
            <person name="Haase D."/>
            <person name="Schoof H."/>
            <person name="Rudd S."/>
            <person name="Zaccaria P."/>
            <person name="Mewes H.-W."/>
            <person name="Mayer K.F.X."/>
            <person name="Kaul S."/>
            <person name="Town C.D."/>
            <person name="Koo H.L."/>
            <person name="Tallon L.J."/>
            <person name="Jenkins J."/>
            <person name="Rooney T."/>
            <person name="Rizzo M."/>
            <person name="Walts A."/>
            <person name="Utterback T."/>
            <person name="Fujii C.Y."/>
            <person name="Shea T.P."/>
            <person name="Creasy T.H."/>
            <person name="Haas B."/>
            <person name="Maiti R."/>
            <person name="Wu D."/>
            <person name="Peterson J."/>
            <person name="Van Aken S."/>
            <person name="Pai G."/>
            <person name="Militscher J."/>
            <person name="Sellers P."/>
            <person name="Gill J.E."/>
            <person name="Feldblyum T.V."/>
            <person name="Preuss D."/>
            <person name="Lin X."/>
            <person name="Nierman W.C."/>
            <person name="Salzberg S.L."/>
            <person name="White O."/>
            <person name="Venter J.C."/>
            <person name="Fraser C.M."/>
            <person name="Kaneko T."/>
            <person name="Nakamura Y."/>
            <person name="Sato S."/>
            <person name="Kato T."/>
            <person name="Asamizu E."/>
            <person name="Sasamoto S."/>
            <person name="Kimura T."/>
            <person name="Idesawa K."/>
            <person name="Kawashima K."/>
            <person name="Kishida Y."/>
            <person name="Kiyokawa C."/>
            <person name="Kohara M."/>
            <person name="Matsumoto M."/>
            <person name="Matsuno A."/>
            <person name="Muraki A."/>
            <person name="Nakayama S."/>
            <person name="Nakazaki N."/>
            <person name="Shinpo S."/>
            <person name="Takeuchi C."/>
            <person name="Wada T."/>
            <person name="Watanabe A."/>
            <person name="Yamada M."/>
            <person name="Yasuda M."/>
            <person name="Tabata S."/>
        </authorList>
    </citation>
    <scope>NUCLEOTIDE SEQUENCE [LARGE SCALE GENOMIC DNA]</scope>
    <source>
        <strain>cv. Columbia</strain>
    </source>
</reference>
<reference key="2">
    <citation type="journal article" date="2017" name="Plant J.">
        <title>Araport11: a complete reannotation of the Arabidopsis thaliana reference genome.</title>
        <authorList>
            <person name="Cheng C.Y."/>
            <person name="Krishnakumar V."/>
            <person name="Chan A.P."/>
            <person name="Thibaud-Nissen F."/>
            <person name="Schobel S."/>
            <person name="Town C.D."/>
        </authorList>
    </citation>
    <scope>GENOME REANNOTATION</scope>
    <source>
        <strain>cv. Columbia</strain>
    </source>
</reference>
<reference key="3">
    <citation type="journal article" date="2003" name="Science">
        <title>Empirical analysis of transcriptional activity in the Arabidopsis genome.</title>
        <authorList>
            <person name="Yamada K."/>
            <person name="Lim J."/>
            <person name="Dale J.M."/>
            <person name="Chen H."/>
            <person name="Shinn P."/>
            <person name="Palm C.J."/>
            <person name="Southwick A.M."/>
            <person name="Wu H.C."/>
            <person name="Kim C.J."/>
            <person name="Nguyen M."/>
            <person name="Pham P.K."/>
            <person name="Cheuk R.F."/>
            <person name="Karlin-Newmann G."/>
            <person name="Liu S.X."/>
            <person name="Lam B."/>
            <person name="Sakano H."/>
            <person name="Wu T."/>
            <person name="Yu G."/>
            <person name="Miranda M."/>
            <person name="Quach H.L."/>
            <person name="Tripp M."/>
            <person name="Chang C.H."/>
            <person name="Lee J.M."/>
            <person name="Toriumi M.J."/>
            <person name="Chan M.M."/>
            <person name="Tang C.C."/>
            <person name="Onodera C.S."/>
            <person name="Deng J.M."/>
            <person name="Akiyama K."/>
            <person name="Ansari Y."/>
            <person name="Arakawa T."/>
            <person name="Banh J."/>
            <person name="Banno F."/>
            <person name="Bowser L."/>
            <person name="Brooks S.Y."/>
            <person name="Carninci P."/>
            <person name="Chao Q."/>
            <person name="Choy N."/>
            <person name="Enju A."/>
            <person name="Goldsmith A.D."/>
            <person name="Gurjal M."/>
            <person name="Hansen N.F."/>
            <person name="Hayashizaki Y."/>
            <person name="Johnson-Hopson C."/>
            <person name="Hsuan V.W."/>
            <person name="Iida K."/>
            <person name="Karnes M."/>
            <person name="Khan S."/>
            <person name="Koesema E."/>
            <person name="Ishida J."/>
            <person name="Jiang P.X."/>
            <person name="Jones T."/>
            <person name="Kawai J."/>
            <person name="Kamiya A."/>
            <person name="Meyers C."/>
            <person name="Nakajima M."/>
            <person name="Narusaka M."/>
            <person name="Seki M."/>
            <person name="Sakurai T."/>
            <person name="Satou M."/>
            <person name="Tamse R."/>
            <person name="Vaysberg M."/>
            <person name="Wallender E.K."/>
            <person name="Wong C."/>
            <person name="Yamamura Y."/>
            <person name="Yuan S."/>
            <person name="Shinozaki K."/>
            <person name="Davis R.W."/>
            <person name="Theologis A."/>
            <person name="Ecker J.R."/>
        </authorList>
    </citation>
    <scope>NUCLEOTIDE SEQUENCE [LARGE SCALE MRNA]</scope>
    <source>
        <strain>cv. Columbia</strain>
    </source>
</reference>
<reference key="4">
    <citation type="journal article" date="2008" name="Plant Cell Physiol.">
        <title>The glycerophosphoryl diester phosphodiesterase-like proteins SHV3 and its homologs play important roles in cell wall organization.</title>
        <authorList>
            <person name="Hayashi S."/>
            <person name="Ishii T."/>
            <person name="Matsunaga T."/>
            <person name="Tominaga R."/>
            <person name="Kuromori T."/>
            <person name="Wada T."/>
            <person name="Shinozaki K."/>
            <person name="Hirayama T."/>
        </authorList>
    </citation>
    <scope>TISSUE SPECIFICITY</scope>
</reference>
<reference key="5">
    <citation type="journal article" date="2011" name="Plant J.">
        <title>Characterization of the Arabidopsis glycerophosphodiester phosphodiesterase (GDPD) family reveals a role of the plastid-localized AtGDPD1 in maintaining cellular phosphate homeostasis under phosphate starvation.</title>
        <authorList>
            <person name="Cheng Y."/>
            <person name="Zhou W."/>
            <person name="El Sheery N.I."/>
            <person name="Peters C."/>
            <person name="Li M."/>
            <person name="Wang X."/>
            <person name="Huang J."/>
        </authorList>
    </citation>
    <scope>TISSUE SPECIFICITY</scope>
    <scope>GENE FAMILY</scope>
    <scope>NOMENCLATURE</scope>
</reference>
<comment type="catalytic activity">
    <reaction evidence="1">
        <text>a sn-glycero-3-phosphodiester + H2O = an alcohol + sn-glycerol 3-phosphate + H(+)</text>
        <dbReference type="Rhea" id="RHEA:12969"/>
        <dbReference type="ChEBI" id="CHEBI:15377"/>
        <dbReference type="ChEBI" id="CHEBI:15378"/>
        <dbReference type="ChEBI" id="CHEBI:30879"/>
        <dbReference type="ChEBI" id="CHEBI:57597"/>
        <dbReference type="ChEBI" id="CHEBI:83408"/>
        <dbReference type="EC" id="3.1.4.46"/>
    </reaction>
</comment>
<comment type="subcellular location">
    <subcellularLocation>
        <location evidence="2">Membrane</location>
        <topology evidence="2">Single-pass membrane protein</topology>
    </subcellularLocation>
</comment>
<comment type="tissue specificity">
    <text evidence="4">Expressed in stems, flowers and siliques.</text>
</comment>
<comment type="similarity">
    <text evidence="7">Belongs to the glycerophosphoryl diester phosphodiesterase family.</text>
</comment>
<proteinExistence type="evidence at transcript level"/>
<feature type="signal peptide" evidence="2">
    <location>
        <begin position="1"/>
        <end position="22"/>
    </location>
</feature>
<feature type="chain" id="PRO_0000430615" description="Glycerophosphodiester phosphodiesterase GDPDL5" evidence="2">
    <location>
        <begin position="23"/>
        <end position="729"/>
    </location>
</feature>
<feature type="transmembrane region" description="Helical" evidence="2">
    <location>
        <begin position="709"/>
        <end position="729"/>
    </location>
</feature>
<feature type="domain" description="GP-PDE 1" evidence="2">
    <location>
        <begin position="33"/>
        <end position="320"/>
    </location>
</feature>
<feature type="domain" description="GP-PDE 2" evidence="2">
    <location>
        <begin position="337"/>
        <end position="645"/>
    </location>
</feature>
<feature type="glycosylation site" description="N-linked (GlcNAc...) asparagine" evidence="3">
    <location>
        <position position="88"/>
    </location>
</feature>
<feature type="glycosylation site" description="N-linked (GlcNAc...) asparagine" evidence="3">
    <location>
        <position position="162"/>
    </location>
</feature>
<feature type="glycosylation site" description="N-linked (GlcNAc...) asparagine" evidence="3">
    <location>
        <position position="218"/>
    </location>
</feature>
<feature type="glycosylation site" description="N-linked (GlcNAc...) asparagine" evidence="3">
    <location>
        <position position="227"/>
    </location>
</feature>
<feature type="glycosylation site" description="N-linked (GlcNAc...) asparagine" evidence="3">
    <location>
        <position position="285"/>
    </location>
</feature>
<feature type="glycosylation site" description="N-linked (GlcNAc...) asparagine" evidence="3">
    <location>
        <position position="302"/>
    </location>
</feature>
<feature type="glycosylation site" description="N-linked (GlcNAc...) asparagine" evidence="3">
    <location>
        <position position="390"/>
    </location>
</feature>
<feature type="glycosylation site" description="N-linked (GlcNAc...) asparagine" evidence="3">
    <location>
        <position position="401"/>
    </location>
</feature>
<feature type="glycosylation site" description="N-linked (GlcNAc...) asparagine" evidence="3">
    <location>
        <position position="507"/>
    </location>
</feature>
<feature type="sequence conflict" description="In Ref. 3; AAO42211." ref="3">
    <original>Q</original>
    <variation>K</variation>
    <location>
        <position position="425"/>
    </location>
</feature>
<feature type="sequence conflict" description="In Ref. 3; AAO42211." ref="3">
    <original>T</original>
    <variation>A</variation>
    <location>
        <position position="656"/>
    </location>
</feature>
<feature type="sequence conflict" description="In Ref. 3; AAO42211." ref="3">
    <original>F</original>
    <variation>S</variation>
    <location>
        <position position="726"/>
    </location>
</feature>
<name>GPDL5_ARATH</name>
<organism evidence="9">
    <name type="scientific">Arabidopsis thaliana</name>
    <name type="common">Mouse-ear cress</name>
    <dbReference type="NCBI Taxonomy" id="3702"/>
    <lineage>
        <taxon>Eukaryota</taxon>
        <taxon>Viridiplantae</taxon>
        <taxon>Streptophyta</taxon>
        <taxon>Embryophyta</taxon>
        <taxon>Tracheophyta</taxon>
        <taxon>Spermatophyta</taxon>
        <taxon>Magnoliopsida</taxon>
        <taxon>eudicotyledons</taxon>
        <taxon>Gunneridae</taxon>
        <taxon>Pentapetalae</taxon>
        <taxon>rosids</taxon>
        <taxon>malvids</taxon>
        <taxon>Brassicales</taxon>
        <taxon>Brassicaceae</taxon>
        <taxon>Camelineae</taxon>
        <taxon>Arabidopsis</taxon>
    </lineage>
</organism>
<accession>F4JEQ1</accession>
<accession>Q84W64</accession>